<evidence type="ECO:0000250" key="1"/>
<evidence type="ECO:0000305" key="2"/>
<reference key="1">
    <citation type="journal article" date="2003" name="Proc. Natl. Acad. Sci. U.S.A.">
        <title>Complete genome sequence of the Q-fever pathogen, Coxiella burnetii.</title>
        <authorList>
            <person name="Seshadri R."/>
            <person name="Paulsen I.T."/>
            <person name="Eisen J.A."/>
            <person name="Read T.D."/>
            <person name="Nelson K.E."/>
            <person name="Nelson W.C."/>
            <person name="Ward N.L."/>
            <person name="Tettelin H."/>
            <person name="Davidsen T.M."/>
            <person name="Beanan M.J."/>
            <person name="DeBoy R.T."/>
            <person name="Daugherty S.C."/>
            <person name="Brinkac L.M."/>
            <person name="Madupu R."/>
            <person name="Dodson R.J."/>
            <person name="Khouri H.M."/>
            <person name="Lee K.H."/>
            <person name="Carty H.A."/>
            <person name="Scanlan D."/>
            <person name="Heinzen R.A."/>
            <person name="Thompson H.A."/>
            <person name="Samuel J.E."/>
            <person name="Fraser C.M."/>
            <person name="Heidelberg J.F."/>
        </authorList>
    </citation>
    <scope>NUCLEOTIDE SEQUENCE [LARGE SCALE GENOMIC DNA]</scope>
    <source>
        <strain>RSA 493 / Nine Mile phase I</strain>
    </source>
</reference>
<name>NNR_COXBU</name>
<organism>
    <name type="scientific">Coxiella burnetii (strain RSA 493 / Nine Mile phase I)</name>
    <dbReference type="NCBI Taxonomy" id="227377"/>
    <lineage>
        <taxon>Bacteria</taxon>
        <taxon>Pseudomonadati</taxon>
        <taxon>Pseudomonadota</taxon>
        <taxon>Gammaproteobacteria</taxon>
        <taxon>Legionellales</taxon>
        <taxon>Coxiellaceae</taxon>
        <taxon>Coxiella</taxon>
    </lineage>
</organism>
<feature type="chain" id="PRO_0000416416" description="Bifunctional NAD(P)H-hydrate repair enzyme Nnr">
    <location>
        <begin position="1"/>
        <end position="488"/>
    </location>
</feature>
<feature type="domain" description="YjeF N-terminal">
    <location>
        <begin position="10"/>
        <end position="211"/>
    </location>
</feature>
<feature type="domain" description="YjeF C-terminal">
    <location>
        <begin position="221"/>
        <end position="488"/>
    </location>
</feature>
<feature type="region of interest" description="NAD(P)H-hydrate epimerase" evidence="1">
    <location>
        <begin position="1"/>
        <end position="214"/>
    </location>
</feature>
<feature type="region of interest" description="NADPHX 1; for epimerase activity" evidence="1">
    <location>
        <begin position="57"/>
        <end position="61"/>
    </location>
</feature>
<feature type="region of interest" description="NADPHX 1; for epimerase activity" evidence="1">
    <location>
        <begin position="125"/>
        <end position="131"/>
    </location>
</feature>
<feature type="region of interest" description="ADP-dependent (S)-NAD(P)H-hydrate dehydratase" evidence="1">
    <location>
        <begin position="221"/>
        <end position="488"/>
    </location>
</feature>
<feature type="region of interest" description="NADPHX 2; for dehydratase activity" evidence="1">
    <location>
        <begin position="363"/>
        <end position="369"/>
    </location>
</feature>
<feature type="binding site" evidence="1">
    <location>
        <position position="58"/>
    </location>
    <ligand>
        <name>K(+)</name>
        <dbReference type="ChEBI" id="CHEBI:29103"/>
    </ligand>
</feature>
<feature type="binding site" evidence="1">
    <location>
        <position position="121"/>
    </location>
    <ligand>
        <name>K(+)</name>
        <dbReference type="ChEBI" id="CHEBI:29103"/>
    </ligand>
</feature>
<feature type="binding site" evidence="1">
    <location>
        <position position="136"/>
    </location>
    <ligand>
        <name>(6S)-NADPHX</name>
        <dbReference type="ChEBI" id="CHEBI:64076"/>
        <label>1</label>
        <note>for epimerase activity</note>
    </ligand>
</feature>
<feature type="binding site" evidence="1">
    <location>
        <position position="154"/>
    </location>
    <ligand>
        <name>(6S)-NADPHX</name>
        <dbReference type="ChEBI" id="CHEBI:64076"/>
        <label>1</label>
        <note>for epimerase activity</note>
    </ligand>
</feature>
<feature type="binding site" evidence="1">
    <location>
        <position position="157"/>
    </location>
    <ligand>
        <name>K(+)</name>
        <dbReference type="ChEBI" id="CHEBI:29103"/>
    </ligand>
</feature>
<feature type="binding site" evidence="1">
    <location>
        <position position="317"/>
    </location>
    <ligand>
        <name>(6S)-NADPHX</name>
        <dbReference type="ChEBI" id="CHEBI:64076"/>
        <label>2</label>
        <note>for dehydratase activity</note>
    </ligand>
</feature>
<feature type="binding site" evidence="1">
    <location>
        <begin position="400"/>
        <end position="404"/>
    </location>
    <ligand>
        <name>ADP</name>
        <dbReference type="ChEBI" id="CHEBI:456216"/>
    </ligand>
</feature>
<feature type="binding site" evidence="1">
    <location>
        <begin position="420"/>
        <end position="429"/>
    </location>
    <ligand>
        <name>ADP</name>
        <dbReference type="ChEBI" id="CHEBI:456216"/>
    </ligand>
</feature>
<feature type="binding site" evidence="1">
    <location>
        <position position="430"/>
    </location>
    <ligand>
        <name>(6S)-NADPHX</name>
        <dbReference type="ChEBI" id="CHEBI:64076"/>
        <label>2</label>
        <note>for dehydratase activity</note>
    </ligand>
</feature>
<dbReference type="EC" id="4.2.1.136"/>
<dbReference type="EC" id="5.1.99.6"/>
<dbReference type="EMBL" id="AE016828">
    <property type="protein sequence ID" value="AAO90601.1"/>
    <property type="molecule type" value="Genomic_DNA"/>
</dbReference>
<dbReference type="RefSeq" id="NP_820087.1">
    <property type="nucleotide sequence ID" value="NC_002971.3"/>
</dbReference>
<dbReference type="RefSeq" id="WP_010958000.1">
    <property type="nucleotide sequence ID" value="NC_002971.4"/>
</dbReference>
<dbReference type="SMR" id="Q83CM5"/>
<dbReference type="STRING" id="227377.CBU_1088"/>
<dbReference type="EnsemblBacteria" id="AAO90601">
    <property type="protein sequence ID" value="AAO90601"/>
    <property type="gene ID" value="CBU_1088"/>
</dbReference>
<dbReference type="GeneID" id="1208989"/>
<dbReference type="KEGG" id="cbu:CBU_1088"/>
<dbReference type="PATRIC" id="fig|227377.7.peg.1082"/>
<dbReference type="eggNOG" id="COG0062">
    <property type="taxonomic scope" value="Bacteria"/>
</dbReference>
<dbReference type="eggNOG" id="COG0063">
    <property type="taxonomic scope" value="Bacteria"/>
</dbReference>
<dbReference type="HOGENOM" id="CLU_024853_4_3_6"/>
<dbReference type="OrthoDB" id="9806925at2"/>
<dbReference type="Proteomes" id="UP000002671">
    <property type="component" value="Chromosome"/>
</dbReference>
<dbReference type="GO" id="GO:0052855">
    <property type="term" value="F:ADP-dependent NAD(P)H-hydrate dehydratase activity"/>
    <property type="evidence" value="ECO:0000318"/>
    <property type="project" value="GO_Central"/>
</dbReference>
<dbReference type="GO" id="GO:0005524">
    <property type="term" value="F:ATP binding"/>
    <property type="evidence" value="ECO:0007669"/>
    <property type="project" value="UniProtKB-KW"/>
</dbReference>
<dbReference type="GO" id="GO:0046872">
    <property type="term" value="F:metal ion binding"/>
    <property type="evidence" value="ECO:0007669"/>
    <property type="project" value="UniProtKB-KW"/>
</dbReference>
<dbReference type="GO" id="GO:0052856">
    <property type="term" value="F:NAD(P)HX epimerase activity"/>
    <property type="evidence" value="ECO:0000318"/>
    <property type="project" value="GO_Central"/>
</dbReference>
<dbReference type="GO" id="GO:0110051">
    <property type="term" value="P:metabolite repair"/>
    <property type="evidence" value="ECO:0000318"/>
    <property type="project" value="GO_Central"/>
</dbReference>
<dbReference type="GO" id="GO:0046496">
    <property type="term" value="P:nicotinamide nucleotide metabolic process"/>
    <property type="evidence" value="ECO:0007669"/>
    <property type="project" value="UniProtKB-UniRule"/>
</dbReference>
<dbReference type="CDD" id="cd01171">
    <property type="entry name" value="YXKO-related"/>
    <property type="match status" value="1"/>
</dbReference>
<dbReference type="FunFam" id="3.40.1190.20:FF:000017">
    <property type="entry name" value="Multifunctional fusion protein"/>
    <property type="match status" value="1"/>
</dbReference>
<dbReference type="FunFam" id="3.40.50.10260:FF:000003">
    <property type="entry name" value="Multifunctional fusion protein"/>
    <property type="match status" value="1"/>
</dbReference>
<dbReference type="Gene3D" id="3.40.1190.20">
    <property type="match status" value="1"/>
</dbReference>
<dbReference type="Gene3D" id="3.40.50.10260">
    <property type="entry name" value="YjeF N-terminal domain"/>
    <property type="match status" value="1"/>
</dbReference>
<dbReference type="HAMAP" id="MF_01965">
    <property type="entry name" value="NADHX_dehydratase"/>
    <property type="match status" value="1"/>
</dbReference>
<dbReference type="HAMAP" id="MF_01966">
    <property type="entry name" value="NADHX_epimerase"/>
    <property type="match status" value="1"/>
</dbReference>
<dbReference type="InterPro" id="IPR000631">
    <property type="entry name" value="CARKD"/>
</dbReference>
<dbReference type="InterPro" id="IPR030677">
    <property type="entry name" value="Nnr"/>
</dbReference>
<dbReference type="InterPro" id="IPR029056">
    <property type="entry name" value="Ribokinase-like"/>
</dbReference>
<dbReference type="InterPro" id="IPR004443">
    <property type="entry name" value="YjeF_N_dom"/>
</dbReference>
<dbReference type="InterPro" id="IPR036652">
    <property type="entry name" value="YjeF_N_dom_sf"/>
</dbReference>
<dbReference type="NCBIfam" id="TIGR00196">
    <property type="entry name" value="yjeF_cterm"/>
    <property type="match status" value="1"/>
</dbReference>
<dbReference type="NCBIfam" id="TIGR00197">
    <property type="entry name" value="yjeF_nterm"/>
    <property type="match status" value="1"/>
</dbReference>
<dbReference type="PANTHER" id="PTHR12592:SF0">
    <property type="entry name" value="ATP-DEPENDENT (S)-NAD(P)H-HYDRATE DEHYDRATASE"/>
    <property type="match status" value="1"/>
</dbReference>
<dbReference type="PANTHER" id="PTHR12592">
    <property type="entry name" value="ATP-DEPENDENT (S)-NAD(P)H-HYDRATE DEHYDRATASE FAMILY MEMBER"/>
    <property type="match status" value="1"/>
</dbReference>
<dbReference type="Pfam" id="PF01256">
    <property type="entry name" value="Carb_kinase"/>
    <property type="match status" value="1"/>
</dbReference>
<dbReference type="Pfam" id="PF03853">
    <property type="entry name" value="YjeF_N"/>
    <property type="match status" value="1"/>
</dbReference>
<dbReference type="PIRSF" id="PIRSF017184">
    <property type="entry name" value="Nnr"/>
    <property type="match status" value="1"/>
</dbReference>
<dbReference type="SUPFAM" id="SSF53613">
    <property type="entry name" value="Ribokinase-like"/>
    <property type="match status" value="1"/>
</dbReference>
<dbReference type="SUPFAM" id="SSF64153">
    <property type="entry name" value="YjeF N-terminal domain-like"/>
    <property type="match status" value="1"/>
</dbReference>
<dbReference type="PROSITE" id="PS51383">
    <property type="entry name" value="YJEF_C_3"/>
    <property type="match status" value="1"/>
</dbReference>
<dbReference type="PROSITE" id="PS51385">
    <property type="entry name" value="YJEF_N"/>
    <property type="match status" value="1"/>
</dbReference>
<sequence>MTVLYQNRQIRELERLAVESGISEYELMCRAGEAAFKALLARWPEAQEITVCCGKGNNGGDGLVLARLAYENGLKVTVYLAGQRHQLKGAAAQAANACEASNLPILPFPEPLLFKGEVIVDALLGSGLSGEVKAPYDHLIAAINQAGQYVLALDVPSGINVDSGEVQGTAVKANLTVTFIAPKRGLYTDKAPAYCGELIVDRLGLSESFFRAVFTDTRLLEWKGVFPLLPKRARDAHKGSYGHVLVIGGDYGMGGAVRMAAEAAARVGAGLVTVATRPEHVPIVSGPRPELMCHQVAAADDLKPLLTAATVVVIGPGLGKSDWAKSLLNKVLETDLPKVLDADSLNLLAESPSQREDWILTPHPGEASRLLGISCNEVQRDRFQAINDLQEKYQGVLVLKGVGTLIKDESQAYYVCPAGNPGMATGGMGDILSGIIGGLVAQRLSLASAAQAGVFIHSMAADRAAEEGGERGLLATDLFPHLRVLVNP</sequence>
<proteinExistence type="inferred from homology"/>
<comment type="function">
    <text evidence="1">Bifunctional enzyme that catalyzes the epimerization of the S- and R-forms of NAD(P)HX and the dehydration of the S-form of NAD(P)HX at the expense of ADP, which is converted to AMP. This allows the repair of both epimers of NAD(P)HX, a damaged form of NAD(P)H that is a result of enzymatic or heat-dependent hydration (By similarity).</text>
</comment>
<comment type="catalytic activity">
    <reaction>
        <text>(6S)-NADHX + ADP = AMP + phosphate + NADH + H(+)</text>
        <dbReference type="Rhea" id="RHEA:32223"/>
        <dbReference type="ChEBI" id="CHEBI:15378"/>
        <dbReference type="ChEBI" id="CHEBI:43474"/>
        <dbReference type="ChEBI" id="CHEBI:57945"/>
        <dbReference type="ChEBI" id="CHEBI:64074"/>
        <dbReference type="ChEBI" id="CHEBI:456215"/>
        <dbReference type="ChEBI" id="CHEBI:456216"/>
        <dbReference type="EC" id="4.2.1.136"/>
    </reaction>
</comment>
<comment type="catalytic activity">
    <reaction>
        <text>(6S)-NADPHX + ADP = AMP + phosphate + NADPH + H(+)</text>
        <dbReference type="Rhea" id="RHEA:32235"/>
        <dbReference type="ChEBI" id="CHEBI:15378"/>
        <dbReference type="ChEBI" id="CHEBI:43474"/>
        <dbReference type="ChEBI" id="CHEBI:57783"/>
        <dbReference type="ChEBI" id="CHEBI:64076"/>
        <dbReference type="ChEBI" id="CHEBI:456215"/>
        <dbReference type="ChEBI" id="CHEBI:456216"/>
        <dbReference type="EC" id="4.2.1.136"/>
    </reaction>
</comment>
<comment type="catalytic activity">
    <reaction>
        <text>(6R)-NADHX = (6S)-NADHX</text>
        <dbReference type="Rhea" id="RHEA:32215"/>
        <dbReference type="ChEBI" id="CHEBI:64074"/>
        <dbReference type="ChEBI" id="CHEBI:64075"/>
        <dbReference type="EC" id="5.1.99.6"/>
    </reaction>
</comment>
<comment type="catalytic activity">
    <reaction>
        <text>(6R)-NADPHX = (6S)-NADPHX</text>
        <dbReference type="Rhea" id="RHEA:32227"/>
        <dbReference type="ChEBI" id="CHEBI:64076"/>
        <dbReference type="ChEBI" id="CHEBI:64077"/>
        <dbReference type="EC" id="5.1.99.6"/>
    </reaction>
</comment>
<comment type="cofactor">
    <cofactor evidence="1">
        <name>K(+)</name>
        <dbReference type="ChEBI" id="CHEBI:29103"/>
    </cofactor>
    <text evidence="1">Binds 1 potassium ion per subunit.</text>
</comment>
<comment type="similarity">
    <text evidence="2">In the N-terminal section; belongs to the NnrE/AIBP family.</text>
</comment>
<comment type="similarity">
    <text evidence="2">In the C-terminal section; belongs to the NnrD/CARKD family.</text>
</comment>
<accession>Q83CM5</accession>
<keyword id="KW-0067">ATP-binding</keyword>
<keyword id="KW-0413">Isomerase</keyword>
<keyword id="KW-0456">Lyase</keyword>
<keyword id="KW-0479">Metal-binding</keyword>
<keyword id="KW-0511">Multifunctional enzyme</keyword>
<keyword id="KW-0520">NAD</keyword>
<keyword id="KW-0521">NADP</keyword>
<keyword id="KW-0547">Nucleotide-binding</keyword>
<keyword id="KW-0630">Potassium</keyword>
<keyword id="KW-1185">Reference proteome</keyword>
<protein>
    <recommendedName>
        <fullName>Bifunctional NAD(P)H-hydrate repair enzyme Nnr</fullName>
    </recommendedName>
    <alternativeName>
        <fullName>Nicotinamide nucleotide repair protein</fullName>
    </alternativeName>
    <domain>
        <recommendedName>
            <fullName>ADP-dependent (S)-NAD(P)H-hydrate dehydratase</fullName>
            <ecNumber>4.2.1.136</ecNumber>
        </recommendedName>
        <alternativeName>
            <fullName>ADP-dependent NAD(P)HX dehydratase</fullName>
        </alternativeName>
    </domain>
    <domain>
        <recommendedName>
            <fullName>NAD(P)H-hydrate epimerase</fullName>
            <ecNumber>5.1.99.6</ecNumber>
        </recommendedName>
        <alternativeName>
            <fullName>NAD(P)HX epimerase</fullName>
        </alternativeName>
    </domain>
</protein>
<gene>
    <name type="primary">nnr</name>
    <name type="ordered locus">CBU_1088</name>
</gene>